<name>MSRA_PICTO</name>
<protein>
    <recommendedName>
        <fullName evidence="1">Peptide methionine sulfoxide reductase MsrA</fullName>
        <shortName evidence="1">Protein-methionine-S-oxide reductase</shortName>
        <ecNumber evidence="1">1.8.4.11</ecNumber>
    </recommendedName>
    <alternativeName>
        <fullName evidence="1">Peptide-methionine (S)-S-oxide reductase</fullName>
        <shortName evidence="1">Peptide Met(O) reductase</shortName>
    </alternativeName>
</protein>
<evidence type="ECO:0000255" key="1">
    <source>
        <dbReference type="HAMAP-Rule" id="MF_01401"/>
    </source>
</evidence>
<keyword id="KW-0560">Oxidoreductase</keyword>
<sequence length="177" mass="20733">MEDVCYLAGGCFWCMEAVFKDIYGINDVQPGYAGGTTVNPTYEEVCSQRTGHAETVRIRYDPEKISFDDILEIYFSVIDPTTLNRQGEDVGTNYRTAIFYINEYQKERAVNYIKNLEASGKYSKIVVSVEPYKNFYPAEDYHKNYFERHPEQGYCRVVIKPKVEKVRQKFFYKINNQ</sequence>
<feature type="chain" id="PRO_0000138622" description="Peptide methionine sulfoxide reductase MsrA">
    <location>
        <begin position="1"/>
        <end position="177"/>
    </location>
</feature>
<feature type="active site" evidence="1">
    <location>
        <position position="11"/>
    </location>
</feature>
<organism>
    <name type="scientific">Picrophilus torridus (strain ATCC 700027 / DSM 9790 / JCM 10055 / NBRC 100828 / KAW 2/3)</name>
    <dbReference type="NCBI Taxonomy" id="1122961"/>
    <lineage>
        <taxon>Archaea</taxon>
        <taxon>Methanobacteriati</taxon>
        <taxon>Thermoplasmatota</taxon>
        <taxon>Thermoplasmata</taxon>
        <taxon>Thermoplasmatales</taxon>
        <taxon>Picrophilaceae</taxon>
        <taxon>Picrophilus</taxon>
    </lineage>
</organism>
<reference key="1">
    <citation type="journal article" date="2004" name="Proc. Natl. Acad. Sci. U.S.A.">
        <title>Genome sequence of Picrophilus torridus and its implications for life around pH 0.</title>
        <authorList>
            <person name="Fuetterer O."/>
            <person name="Angelov A."/>
            <person name="Liesegang H."/>
            <person name="Gottschalk G."/>
            <person name="Schleper C."/>
            <person name="Schepers B."/>
            <person name="Dock C."/>
            <person name="Antranikian G."/>
            <person name="Liebl W."/>
        </authorList>
    </citation>
    <scope>NUCLEOTIDE SEQUENCE [LARGE SCALE GENOMIC DNA]</scope>
    <source>
        <strain>ATCC 700027 / DSM 9790 / JCM 10055 / NBRC 100828 / KAW 2/3</strain>
    </source>
</reference>
<comment type="function">
    <text evidence="1">Has an important function as a repair enzyme for proteins that have been inactivated by oxidation. Catalyzes the reversible oxidation-reduction of methionine sulfoxide in proteins to methionine.</text>
</comment>
<comment type="catalytic activity">
    <reaction evidence="1">
        <text>L-methionyl-[protein] + [thioredoxin]-disulfide + H2O = L-methionyl-(S)-S-oxide-[protein] + [thioredoxin]-dithiol</text>
        <dbReference type="Rhea" id="RHEA:14217"/>
        <dbReference type="Rhea" id="RHEA-COMP:10698"/>
        <dbReference type="Rhea" id="RHEA-COMP:10700"/>
        <dbReference type="Rhea" id="RHEA-COMP:12313"/>
        <dbReference type="Rhea" id="RHEA-COMP:12315"/>
        <dbReference type="ChEBI" id="CHEBI:15377"/>
        <dbReference type="ChEBI" id="CHEBI:16044"/>
        <dbReference type="ChEBI" id="CHEBI:29950"/>
        <dbReference type="ChEBI" id="CHEBI:44120"/>
        <dbReference type="ChEBI" id="CHEBI:50058"/>
        <dbReference type="EC" id="1.8.4.11"/>
    </reaction>
</comment>
<comment type="catalytic activity">
    <reaction evidence="1">
        <text>[thioredoxin]-disulfide + L-methionine + H2O = L-methionine (S)-S-oxide + [thioredoxin]-dithiol</text>
        <dbReference type="Rhea" id="RHEA:19993"/>
        <dbReference type="Rhea" id="RHEA-COMP:10698"/>
        <dbReference type="Rhea" id="RHEA-COMP:10700"/>
        <dbReference type="ChEBI" id="CHEBI:15377"/>
        <dbReference type="ChEBI" id="CHEBI:29950"/>
        <dbReference type="ChEBI" id="CHEBI:50058"/>
        <dbReference type="ChEBI" id="CHEBI:57844"/>
        <dbReference type="ChEBI" id="CHEBI:58772"/>
        <dbReference type="EC" id="1.8.4.11"/>
    </reaction>
</comment>
<comment type="similarity">
    <text evidence="1">Belongs to the MsrA Met sulfoxide reductase family.</text>
</comment>
<gene>
    <name evidence="1" type="primary">msrA</name>
    <name type="ordered locus">PTO0143</name>
</gene>
<dbReference type="EC" id="1.8.4.11" evidence="1"/>
<dbReference type="EMBL" id="AE017261">
    <property type="protein sequence ID" value="AAT42728.1"/>
    <property type="molecule type" value="Genomic_DNA"/>
</dbReference>
<dbReference type="RefSeq" id="WP_011176944.1">
    <property type="nucleotide sequence ID" value="NC_005877.1"/>
</dbReference>
<dbReference type="SMR" id="Q6L2S4"/>
<dbReference type="FunCoup" id="Q6L2S4">
    <property type="interactions" value="158"/>
</dbReference>
<dbReference type="STRING" id="263820.PTO0143"/>
<dbReference type="PaxDb" id="263820-PTO0143"/>
<dbReference type="GeneID" id="2845313"/>
<dbReference type="KEGG" id="pto:PTO0143"/>
<dbReference type="PATRIC" id="fig|263820.9.peg.158"/>
<dbReference type="eggNOG" id="arCOG02816">
    <property type="taxonomic scope" value="Archaea"/>
</dbReference>
<dbReference type="HOGENOM" id="CLU_031040_10_0_2"/>
<dbReference type="InParanoid" id="Q6L2S4"/>
<dbReference type="OrthoDB" id="5961at2157"/>
<dbReference type="Proteomes" id="UP000000438">
    <property type="component" value="Chromosome"/>
</dbReference>
<dbReference type="GO" id="GO:0033744">
    <property type="term" value="F:L-methionine:thioredoxin-disulfide S-oxidoreductase activity"/>
    <property type="evidence" value="ECO:0007669"/>
    <property type="project" value="RHEA"/>
</dbReference>
<dbReference type="GO" id="GO:0008113">
    <property type="term" value="F:peptide-methionine (S)-S-oxide reductase activity"/>
    <property type="evidence" value="ECO:0007669"/>
    <property type="project" value="UniProtKB-UniRule"/>
</dbReference>
<dbReference type="GO" id="GO:0036211">
    <property type="term" value="P:protein modification process"/>
    <property type="evidence" value="ECO:0007669"/>
    <property type="project" value="UniProtKB-UniRule"/>
</dbReference>
<dbReference type="Gene3D" id="3.30.1060.10">
    <property type="entry name" value="Peptide methionine sulphoxide reductase MsrA"/>
    <property type="match status" value="1"/>
</dbReference>
<dbReference type="HAMAP" id="MF_01401">
    <property type="entry name" value="MsrA"/>
    <property type="match status" value="1"/>
</dbReference>
<dbReference type="InterPro" id="IPR002569">
    <property type="entry name" value="Met_Sox_Rdtase_MsrA_dom"/>
</dbReference>
<dbReference type="InterPro" id="IPR036509">
    <property type="entry name" value="Met_Sox_Rdtase_MsrA_sf"/>
</dbReference>
<dbReference type="NCBIfam" id="TIGR00401">
    <property type="entry name" value="msrA"/>
    <property type="match status" value="1"/>
</dbReference>
<dbReference type="PANTHER" id="PTHR43774">
    <property type="entry name" value="PEPTIDE METHIONINE SULFOXIDE REDUCTASE"/>
    <property type="match status" value="1"/>
</dbReference>
<dbReference type="PANTHER" id="PTHR43774:SF1">
    <property type="entry name" value="PEPTIDE METHIONINE SULFOXIDE REDUCTASE MSRA 2"/>
    <property type="match status" value="1"/>
</dbReference>
<dbReference type="Pfam" id="PF01625">
    <property type="entry name" value="PMSR"/>
    <property type="match status" value="1"/>
</dbReference>
<dbReference type="SUPFAM" id="SSF55068">
    <property type="entry name" value="Peptide methionine sulfoxide reductase"/>
    <property type="match status" value="1"/>
</dbReference>
<accession>Q6L2S4</accession>
<proteinExistence type="inferred from homology"/>